<dbReference type="EC" id="6.1.1.22" evidence="1"/>
<dbReference type="EMBL" id="CP000056">
    <property type="protein sequence ID" value="AAX71630.1"/>
    <property type="molecule type" value="Genomic_DNA"/>
</dbReference>
<dbReference type="RefSeq" id="WP_002985437.1">
    <property type="nucleotide sequence ID" value="NC_007296.2"/>
</dbReference>
<dbReference type="SMR" id="Q48UH6"/>
<dbReference type="GeneID" id="69901153"/>
<dbReference type="KEGG" id="spb:M28_Spy0516"/>
<dbReference type="HOGENOM" id="CLU_004553_2_0_9"/>
<dbReference type="GO" id="GO:0005737">
    <property type="term" value="C:cytoplasm"/>
    <property type="evidence" value="ECO:0007669"/>
    <property type="project" value="UniProtKB-SubCell"/>
</dbReference>
<dbReference type="GO" id="GO:0004816">
    <property type="term" value="F:asparagine-tRNA ligase activity"/>
    <property type="evidence" value="ECO:0007669"/>
    <property type="project" value="UniProtKB-UniRule"/>
</dbReference>
<dbReference type="GO" id="GO:0005524">
    <property type="term" value="F:ATP binding"/>
    <property type="evidence" value="ECO:0007669"/>
    <property type="project" value="UniProtKB-UniRule"/>
</dbReference>
<dbReference type="GO" id="GO:0140096">
    <property type="term" value="F:catalytic activity, acting on a protein"/>
    <property type="evidence" value="ECO:0007669"/>
    <property type="project" value="UniProtKB-ARBA"/>
</dbReference>
<dbReference type="GO" id="GO:0003676">
    <property type="term" value="F:nucleic acid binding"/>
    <property type="evidence" value="ECO:0007669"/>
    <property type="project" value="InterPro"/>
</dbReference>
<dbReference type="GO" id="GO:0016740">
    <property type="term" value="F:transferase activity"/>
    <property type="evidence" value="ECO:0007669"/>
    <property type="project" value="UniProtKB-ARBA"/>
</dbReference>
<dbReference type="GO" id="GO:0006421">
    <property type="term" value="P:asparaginyl-tRNA aminoacylation"/>
    <property type="evidence" value="ECO:0007669"/>
    <property type="project" value="UniProtKB-UniRule"/>
</dbReference>
<dbReference type="CDD" id="cd04323">
    <property type="entry name" value="AsnRS_cyto_like_N"/>
    <property type="match status" value="1"/>
</dbReference>
<dbReference type="CDD" id="cd00776">
    <property type="entry name" value="AsxRS_core"/>
    <property type="match status" value="1"/>
</dbReference>
<dbReference type="Gene3D" id="3.30.930.10">
    <property type="entry name" value="Bira Bifunctional Protein, Domain 2"/>
    <property type="match status" value="1"/>
</dbReference>
<dbReference type="Gene3D" id="2.40.50.140">
    <property type="entry name" value="Nucleic acid-binding proteins"/>
    <property type="match status" value="1"/>
</dbReference>
<dbReference type="HAMAP" id="MF_00534">
    <property type="entry name" value="Asn_tRNA_synth"/>
    <property type="match status" value="1"/>
</dbReference>
<dbReference type="InterPro" id="IPR004364">
    <property type="entry name" value="Aa-tRNA-synt_II"/>
</dbReference>
<dbReference type="InterPro" id="IPR006195">
    <property type="entry name" value="aa-tRNA-synth_II"/>
</dbReference>
<dbReference type="InterPro" id="IPR045864">
    <property type="entry name" value="aa-tRNA-synth_II/BPL/LPL"/>
</dbReference>
<dbReference type="InterPro" id="IPR004522">
    <property type="entry name" value="Asn-tRNA-ligase"/>
</dbReference>
<dbReference type="InterPro" id="IPR002312">
    <property type="entry name" value="Asp/Asn-tRNA-synth_IIb"/>
</dbReference>
<dbReference type="InterPro" id="IPR012340">
    <property type="entry name" value="NA-bd_OB-fold"/>
</dbReference>
<dbReference type="InterPro" id="IPR004365">
    <property type="entry name" value="NA-bd_OB_tRNA"/>
</dbReference>
<dbReference type="NCBIfam" id="TIGR00457">
    <property type="entry name" value="asnS"/>
    <property type="match status" value="1"/>
</dbReference>
<dbReference type="NCBIfam" id="NF003037">
    <property type="entry name" value="PRK03932.1"/>
    <property type="match status" value="1"/>
</dbReference>
<dbReference type="PANTHER" id="PTHR22594:SF34">
    <property type="entry name" value="ASPARAGINE--TRNA LIGASE, MITOCHONDRIAL-RELATED"/>
    <property type="match status" value="1"/>
</dbReference>
<dbReference type="PANTHER" id="PTHR22594">
    <property type="entry name" value="ASPARTYL/LYSYL-TRNA SYNTHETASE"/>
    <property type="match status" value="1"/>
</dbReference>
<dbReference type="Pfam" id="PF00152">
    <property type="entry name" value="tRNA-synt_2"/>
    <property type="match status" value="1"/>
</dbReference>
<dbReference type="Pfam" id="PF01336">
    <property type="entry name" value="tRNA_anti-codon"/>
    <property type="match status" value="1"/>
</dbReference>
<dbReference type="PRINTS" id="PR01042">
    <property type="entry name" value="TRNASYNTHASP"/>
</dbReference>
<dbReference type="SUPFAM" id="SSF55681">
    <property type="entry name" value="Class II aaRS and biotin synthetases"/>
    <property type="match status" value="1"/>
</dbReference>
<dbReference type="SUPFAM" id="SSF50249">
    <property type="entry name" value="Nucleic acid-binding proteins"/>
    <property type="match status" value="1"/>
</dbReference>
<dbReference type="PROSITE" id="PS50862">
    <property type="entry name" value="AA_TRNA_LIGASE_II"/>
    <property type="match status" value="1"/>
</dbReference>
<reference key="1">
    <citation type="journal article" date="2005" name="J. Infect. Dis.">
        <title>Genome sequence of a serotype M28 strain of group A Streptococcus: potential new insights into puerperal sepsis and bacterial disease specificity.</title>
        <authorList>
            <person name="Green N.M."/>
            <person name="Zhang S."/>
            <person name="Porcella S.F."/>
            <person name="Nagiec M.J."/>
            <person name="Barbian K.D."/>
            <person name="Beres S.B."/>
            <person name="Lefebvre R.B."/>
            <person name="Musser J.M."/>
        </authorList>
    </citation>
    <scope>NUCLEOTIDE SEQUENCE [LARGE SCALE GENOMIC DNA]</scope>
    <source>
        <strain>MGAS6180</strain>
    </source>
</reference>
<gene>
    <name evidence="1" type="primary">asnS</name>
    <name type="ordered locus">M28_Spy0516</name>
</gene>
<keyword id="KW-0030">Aminoacyl-tRNA synthetase</keyword>
<keyword id="KW-0067">ATP-binding</keyword>
<keyword id="KW-0963">Cytoplasm</keyword>
<keyword id="KW-0436">Ligase</keyword>
<keyword id="KW-0547">Nucleotide-binding</keyword>
<keyword id="KW-0648">Protein biosynthesis</keyword>
<sequence length="448" mass="51208">MSKKLISIVDVKDYVGQEVTIGAWVANKSGKGKIAFVQLRDGSAFFQGVAFKPNFIEKYGEESGLEKFDVIKRLNQETSVYVTGIVKEDERSKFGYELDITDLEIIGESHEYPITPKEHGTDFLMDNRHLWLRSRKQMAVMQIRNAIIYATYEFFDQNGFIKFDSPILSENAAEDSTELFETDYFGKPAFLSQSGQLYLEAGAMALGRVFDFGPVFRAEKSKTRRHLTEFWMMDAEYSFLSHEESLDLQEAYVKALIQGVLDRAPQALDILERDVEALKRYITEPFKRVSYDDAITLLQEHEADEDTDYEHLEHGDDFGSPHETWISNYFGVPTFVVNYPASFKAFYMKPVPGNPERVLCADLLAPEGYGEIIGGSMREDNYDALVAKMDELGMDKSEYDFYLDLRKYGSVPHGGFGIGIERMVTFVAGTKHIREAIPFPRMLHRIRP</sequence>
<name>SYN_STRPM</name>
<comment type="catalytic activity">
    <reaction evidence="1">
        <text>tRNA(Asn) + L-asparagine + ATP = L-asparaginyl-tRNA(Asn) + AMP + diphosphate + H(+)</text>
        <dbReference type="Rhea" id="RHEA:11180"/>
        <dbReference type="Rhea" id="RHEA-COMP:9659"/>
        <dbReference type="Rhea" id="RHEA-COMP:9674"/>
        <dbReference type="ChEBI" id="CHEBI:15378"/>
        <dbReference type="ChEBI" id="CHEBI:30616"/>
        <dbReference type="ChEBI" id="CHEBI:33019"/>
        <dbReference type="ChEBI" id="CHEBI:58048"/>
        <dbReference type="ChEBI" id="CHEBI:78442"/>
        <dbReference type="ChEBI" id="CHEBI:78515"/>
        <dbReference type="ChEBI" id="CHEBI:456215"/>
        <dbReference type="EC" id="6.1.1.22"/>
    </reaction>
</comment>
<comment type="subunit">
    <text evidence="1">Homodimer.</text>
</comment>
<comment type="subcellular location">
    <subcellularLocation>
        <location evidence="1">Cytoplasm</location>
    </subcellularLocation>
</comment>
<comment type="similarity">
    <text evidence="1">Belongs to the class-II aminoacyl-tRNA synthetase family.</text>
</comment>
<accession>Q48UH6</accession>
<proteinExistence type="inferred from homology"/>
<evidence type="ECO:0000255" key="1">
    <source>
        <dbReference type="HAMAP-Rule" id="MF_00534"/>
    </source>
</evidence>
<feature type="chain" id="PRO_1000051447" description="Asparagine--tRNA ligase">
    <location>
        <begin position="1"/>
        <end position="448"/>
    </location>
</feature>
<protein>
    <recommendedName>
        <fullName evidence="1">Asparagine--tRNA ligase</fullName>
        <ecNumber evidence="1">6.1.1.22</ecNumber>
    </recommendedName>
    <alternativeName>
        <fullName evidence="1">Asparaginyl-tRNA synthetase</fullName>
        <shortName evidence="1">AsnRS</shortName>
    </alternativeName>
</protein>
<organism>
    <name type="scientific">Streptococcus pyogenes serotype M28 (strain MGAS6180)</name>
    <dbReference type="NCBI Taxonomy" id="319701"/>
    <lineage>
        <taxon>Bacteria</taxon>
        <taxon>Bacillati</taxon>
        <taxon>Bacillota</taxon>
        <taxon>Bacilli</taxon>
        <taxon>Lactobacillales</taxon>
        <taxon>Streptococcaceae</taxon>
        <taxon>Streptococcus</taxon>
    </lineage>
</organism>